<organism>
    <name type="scientific">Encephalitozoon hellem</name>
    <name type="common">Microsporidian parasite</name>
    <dbReference type="NCBI Taxonomy" id="27973"/>
    <lineage>
        <taxon>Eukaryota</taxon>
        <taxon>Fungi</taxon>
        <taxon>Fungi incertae sedis</taxon>
        <taxon>Microsporidia</taxon>
        <taxon>Unikaryonidae</taxon>
        <taxon>Encephalitozoon</taxon>
    </lineage>
</organism>
<comment type="function">
    <text>Involved in formation of a polar tube through which the infectious agent is passed on to the host cell.</text>
</comment>
<comment type="subcellular location">
    <subcellularLocation>
        <location evidence="5">Spore polar tube</location>
    </subcellularLocation>
</comment>
<comment type="developmental stage">
    <text evidence="5">Found in spores. Expression is high during polar tube formation.</text>
</comment>
<comment type="PTM">
    <text evidence="4">O-mannosylated. O-mannosylation has functional significance for the ability of microsporidia to invade their host cells.</text>
</comment>
<protein>
    <recommendedName>
        <fullName>Polar tube protein 1</fullName>
    </recommendedName>
    <alternativeName>
        <fullName>Major polar tube protein</fullName>
        <shortName>Major PTP</shortName>
    </alternativeName>
    <alternativeName>
        <fullName>PTP Eh55</fullName>
    </alternativeName>
</protein>
<reference key="1">
    <citation type="journal article" date="1998" name="Mol. Biochem. Parasitol.">
        <title>The molecular characterization of the major polar tube protein gene from Encephalitozoon hellem, a microsporidian parasite of humans.</title>
        <authorList>
            <person name="Keohane E.M."/>
            <person name="Orr G.A."/>
            <person name="Zhang H.S."/>
            <person name="Takvorian P.M."/>
            <person name="Cali A."/>
            <person name="Tanowitz H.B."/>
            <person name="Wittner M."/>
            <person name="Weiss L.M."/>
        </authorList>
    </citation>
    <scope>NUCLEOTIDE SEQUENCE [GENOMIC DNA]</scope>
    <scope>SUBCELLULAR LOCATION</scope>
    <scope>DEVELOPMENTAL STAGE</scope>
</reference>
<reference key="2">
    <citation type="journal article" date="2004" name="Infect. Immun.">
        <title>Glycosylation of the major polar tube protein of Encephalitozoon hellem, a microsporidian parasite that infects humans.</title>
        <authorList>
            <person name="Xu Y."/>
            <person name="Takvorian P.M."/>
            <person name="Cali A."/>
            <person name="Orr G.A."/>
            <person name="Weiss L.M."/>
        </authorList>
    </citation>
    <scope>O-MANNOSYLATION</scope>
    <scope>IDENTIFICATION BY MASS SPECTROMETRY</scope>
</reference>
<keyword id="KW-0325">Glycoprotein</keyword>
<keyword id="KW-0677">Repeat</keyword>
<keyword id="KW-0732">Signal</keyword>
<keyword id="KW-0749">Sporulation</keyword>
<name>PTP1_ENCHE</name>
<feature type="signal peptide" evidence="1">
    <location>
        <begin position="1"/>
        <end position="22"/>
    </location>
</feature>
<feature type="chain" id="PRO_0000022182" description="Polar tube protein 1">
    <location>
        <begin position="23"/>
        <end position="453"/>
    </location>
</feature>
<feature type="repeat" description="1">
    <location>
        <begin position="214"/>
        <end position="233"/>
    </location>
</feature>
<feature type="repeat" description="2">
    <location>
        <begin position="234"/>
        <end position="253"/>
    </location>
</feature>
<feature type="repeat" description="3">
    <location>
        <begin position="254"/>
        <end position="273"/>
    </location>
</feature>
<feature type="repeat" description="4">
    <location>
        <begin position="274"/>
        <end position="293"/>
    </location>
</feature>
<feature type="repeat" description="5">
    <location>
        <begin position="294"/>
        <end position="313"/>
    </location>
</feature>
<feature type="repeat" description="6">
    <location>
        <begin position="314"/>
        <end position="333"/>
    </location>
</feature>
<feature type="region of interest" description="Disordered" evidence="3">
    <location>
        <begin position="61"/>
        <end position="87"/>
    </location>
</feature>
<feature type="region of interest" description="6 X 20 AA approximate tandem repeats">
    <location>
        <begin position="214"/>
        <end position="333"/>
    </location>
</feature>
<feature type="compositionally biased region" description="Low complexity" evidence="3">
    <location>
        <begin position="63"/>
        <end position="73"/>
    </location>
</feature>
<feature type="compositionally biased region" description="Polar residues" evidence="3">
    <location>
        <begin position="74"/>
        <end position="87"/>
    </location>
</feature>
<feature type="glycosylation site" description="N-linked (GlcNAc...) asparagine" evidence="2">
    <location>
        <position position="79"/>
    </location>
</feature>
<feature type="glycosylation site" description="N-linked (GlcNAc...) asparagine" evidence="2">
    <location>
        <position position="225"/>
    </location>
</feature>
<feature type="glycosylation site" description="N-linked (GlcNAc...) asparagine" evidence="2">
    <location>
        <position position="245"/>
    </location>
</feature>
<feature type="glycosylation site" description="N-linked (GlcNAc...) asparagine" evidence="2">
    <location>
        <position position="265"/>
    </location>
</feature>
<feature type="glycosylation site" description="N-linked (GlcNAc...) asparagine" evidence="2">
    <location>
        <position position="285"/>
    </location>
</feature>
<feature type="glycosylation site" description="N-linked (GlcNAc...) asparagine" evidence="2">
    <location>
        <position position="305"/>
    </location>
</feature>
<feature type="glycosylation site" description="N-linked (GlcNAc...) asparagine" evidence="2">
    <location>
        <position position="325"/>
    </location>
</feature>
<feature type="glycosylation site" description="N-linked (GlcNAc...) asparagine" evidence="2">
    <location>
        <position position="344"/>
    </location>
</feature>
<gene>
    <name type="primary">PTP1</name>
    <name type="synonym">PTP55</name>
</gene>
<proteinExistence type="evidence at protein level"/>
<evidence type="ECO:0000250" key="1"/>
<evidence type="ECO:0000255" key="2"/>
<evidence type="ECO:0000256" key="3">
    <source>
        <dbReference type="SAM" id="MobiDB-lite"/>
    </source>
</evidence>
<evidence type="ECO:0000269" key="4">
    <source>
    </source>
</evidence>
<evidence type="ECO:0000269" key="5">
    <source>
    </source>
</evidence>
<accession>O76273</accession>
<sequence>MKGISKILSASIMVMKLGNVYSAVPLCSNTYDPSQQQPSYVLIPSTPEAITNCAYSPKNAYVPSSPTTSSSTPGTNNDNETSPTTEDVGTCKISVVKHCDTPGASSTPCEPEQTIPAQPVTMATVTPAIIASVQTPSVVSVIPVTQKVIQPATMIVPPSSIIPGYYPNGTPAAPGQQGQILSGSVLAPGASSCQLVPGNTPGQMLPGMTPGVSPCLPTQGGDGSNQTIPGIVYPCQPGQGGSGSNQTIPGVISPCQPGQGGSGSNQTIPGIVYPCQPGQGGSGSNQTIPGVISPCQPGQGGSGSNQTIPGIVYPCQPGQNGDGSNQTIPGVISPCQPGQGGNGNGTTGQPGQCVSVPQTPNPIAMPPISGISGNGYPTSTTYTQSLGQLGPCIDVQKPTSSCESQTNEKSTMQYAMEACAAPTPTVVIGNSEYLVGPGMYSSLTSPCNSCCQC</sequence>
<dbReference type="EMBL" id="AF044915">
    <property type="protein sequence ID" value="AAC32812.1"/>
    <property type="molecule type" value="Genomic_DNA"/>
</dbReference>
<dbReference type="GlyCosmos" id="O76273">
    <property type="glycosylation" value="8 sites, No reported glycans"/>
</dbReference>
<dbReference type="VEuPathDB" id="MicrosporidiaDB:EHEL_060170"/>
<dbReference type="VEuPathDB" id="MicrosporidiaDB:KMI_03g04600"/>
<dbReference type="GO" id="GO:0044099">
    <property type="term" value="C:polar tube"/>
    <property type="evidence" value="ECO:0007669"/>
    <property type="project" value="UniProtKB-SubCell"/>
</dbReference>
<dbReference type="GO" id="GO:0030435">
    <property type="term" value="P:sporulation resulting in formation of a cellular spore"/>
    <property type="evidence" value="ECO:0007669"/>
    <property type="project" value="UniProtKB-KW"/>
</dbReference>